<dbReference type="EC" id="5.3.1.24" evidence="1"/>
<dbReference type="EMBL" id="CP000920">
    <property type="protein sequence ID" value="ACO22151.1"/>
    <property type="molecule type" value="Genomic_DNA"/>
</dbReference>
<dbReference type="RefSeq" id="WP_000169909.1">
    <property type="nucleotide sequence ID" value="NC_012467.1"/>
</dbReference>
<dbReference type="SMR" id="C1CMD4"/>
<dbReference type="KEGG" id="spp:SPP_1821"/>
<dbReference type="HOGENOM" id="CLU_076364_1_0_9"/>
<dbReference type="UniPathway" id="UPA00035">
    <property type="reaction ID" value="UER00042"/>
</dbReference>
<dbReference type="GO" id="GO:0004640">
    <property type="term" value="F:phosphoribosylanthranilate isomerase activity"/>
    <property type="evidence" value="ECO:0007669"/>
    <property type="project" value="UniProtKB-UniRule"/>
</dbReference>
<dbReference type="GO" id="GO:0000162">
    <property type="term" value="P:L-tryptophan biosynthetic process"/>
    <property type="evidence" value="ECO:0007669"/>
    <property type="project" value="UniProtKB-UniRule"/>
</dbReference>
<dbReference type="CDD" id="cd00405">
    <property type="entry name" value="PRAI"/>
    <property type="match status" value="1"/>
</dbReference>
<dbReference type="FunFam" id="3.20.20.70:FF:000075">
    <property type="entry name" value="Tryptophan biosynthesis protein TRP1"/>
    <property type="match status" value="1"/>
</dbReference>
<dbReference type="Gene3D" id="3.20.20.70">
    <property type="entry name" value="Aldolase class I"/>
    <property type="match status" value="1"/>
</dbReference>
<dbReference type="HAMAP" id="MF_00135">
    <property type="entry name" value="PRAI"/>
    <property type="match status" value="1"/>
</dbReference>
<dbReference type="InterPro" id="IPR013785">
    <property type="entry name" value="Aldolase_TIM"/>
</dbReference>
<dbReference type="InterPro" id="IPR001240">
    <property type="entry name" value="PRAI_dom"/>
</dbReference>
<dbReference type="InterPro" id="IPR011060">
    <property type="entry name" value="RibuloseP-bd_barrel"/>
</dbReference>
<dbReference type="InterPro" id="IPR044643">
    <property type="entry name" value="TrpF_fam"/>
</dbReference>
<dbReference type="NCBIfam" id="NF002300">
    <property type="entry name" value="PRK01222.1-7"/>
    <property type="match status" value="1"/>
</dbReference>
<dbReference type="PANTHER" id="PTHR42894">
    <property type="entry name" value="N-(5'-PHOSPHORIBOSYL)ANTHRANILATE ISOMERASE"/>
    <property type="match status" value="1"/>
</dbReference>
<dbReference type="PANTHER" id="PTHR42894:SF1">
    <property type="entry name" value="N-(5'-PHOSPHORIBOSYL)ANTHRANILATE ISOMERASE"/>
    <property type="match status" value="1"/>
</dbReference>
<dbReference type="Pfam" id="PF00697">
    <property type="entry name" value="PRAI"/>
    <property type="match status" value="1"/>
</dbReference>
<dbReference type="SUPFAM" id="SSF51366">
    <property type="entry name" value="Ribulose-phoshate binding barrel"/>
    <property type="match status" value="1"/>
</dbReference>
<gene>
    <name evidence="1" type="primary">trpF</name>
    <name type="ordered locus">SPP_1821</name>
</gene>
<sequence length="199" mass="21260">MTKVKICGLSTKEAVETAVSAGADYIGFVFAPSKRQVTLEEAAVLAKLIPADVKKVGVFVSPSRVELLEAIDKVGLDLVQVHGQVADDLFENLPCASIQAVQVDGNGHVPNSQADYLLFDAPVAGSGQPFDWGQLDTTGLAQPFFIAGGLNEDNVVKAIQHFTPYAVDVSSGVETDGQKDHEKIRRFIERVKHGISGTK</sequence>
<organism>
    <name type="scientific">Streptococcus pneumoniae (strain P1031)</name>
    <dbReference type="NCBI Taxonomy" id="488223"/>
    <lineage>
        <taxon>Bacteria</taxon>
        <taxon>Bacillati</taxon>
        <taxon>Bacillota</taxon>
        <taxon>Bacilli</taxon>
        <taxon>Lactobacillales</taxon>
        <taxon>Streptococcaceae</taxon>
        <taxon>Streptococcus</taxon>
    </lineage>
</organism>
<keyword id="KW-0028">Amino-acid biosynthesis</keyword>
<keyword id="KW-0057">Aromatic amino acid biosynthesis</keyword>
<keyword id="KW-0413">Isomerase</keyword>
<keyword id="KW-0822">Tryptophan biosynthesis</keyword>
<feature type="chain" id="PRO_1000197127" description="N-(5'-phosphoribosyl)anthranilate isomerase">
    <location>
        <begin position="1"/>
        <end position="199"/>
    </location>
</feature>
<protein>
    <recommendedName>
        <fullName evidence="1">N-(5'-phosphoribosyl)anthranilate isomerase</fullName>
        <shortName evidence="1">PRAI</shortName>
        <ecNumber evidence="1">5.3.1.24</ecNumber>
    </recommendedName>
</protein>
<name>TRPF_STRZP</name>
<proteinExistence type="inferred from homology"/>
<accession>C1CMD4</accession>
<reference key="1">
    <citation type="journal article" date="2010" name="Genome Biol.">
        <title>Structure and dynamics of the pan-genome of Streptococcus pneumoniae and closely related species.</title>
        <authorList>
            <person name="Donati C."/>
            <person name="Hiller N.L."/>
            <person name="Tettelin H."/>
            <person name="Muzzi A."/>
            <person name="Croucher N.J."/>
            <person name="Angiuoli S.V."/>
            <person name="Oggioni M."/>
            <person name="Dunning Hotopp J.C."/>
            <person name="Hu F.Z."/>
            <person name="Riley D.R."/>
            <person name="Covacci A."/>
            <person name="Mitchell T.J."/>
            <person name="Bentley S.D."/>
            <person name="Kilian M."/>
            <person name="Ehrlich G.D."/>
            <person name="Rappuoli R."/>
            <person name="Moxon E.R."/>
            <person name="Masignani V."/>
        </authorList>
    </citation>
    <scope>NUCLEOTIDE SEQUENCE [LARGE SCALE GENOMIC DNA]</scope>
    <source>
        <strain>P1031</strain>
    </source>
</reference>
<comment type="catalytic activity">
    <reaction evidence="1">
        <text>N-(5-phospho-beta-D-ribosyl)anthranilate = 1-(2-carboxyphenylamino)-1-deoxy-D-ribulose 5-phosphate</text>
        <dbReference type="Rhea" id="RHEA:21540"/>
        <dbReference type="ChEBI" id="CHEBI:18277"/>
        <dbReference type="ChEBI" id="CHEBI:58613"/>
        <dbReference type="EC" id="5.3.1.24"/>
    </reaction>
</comment>
<comment type="pathway">
    <text evidence="1">Amino-acid biosynthesis; L-tryptophan biosynthesis; L-tryptophan from chorismate: step 3/5.</text>
</comment>
<comment type="similarity">
    <text evidence="1">Belongs to the TrpF family.</text>
</comment>
<evidence type="ECO:0000255" key="1">
    <source>
        <dbReference type="HAMAP-Rule" id="MF_00135"/>
    </source>
</evidence>